<proteinExistence type="inferred from homology"/>
<geneLocation type="chloroplast"/>
<protein>
    <recommendedName>
        <fullName evidence="2">Photosystem II D2 protein</fullName>
        <shortName evidence="2">PSII D2 protein</shortName>
        <ecNumber evidence="2">1.10.3.9</ecNumber>
    </recommendedName>
    <alternativeName>
        <fullName evidence="2">Photosystem Q(A) protein</fullName>
    </alternativeName>
</protein>
<feature type="initiator methionine" description="Removed" evidence="1">
    <location>
        <position position="1"/>
    </location>
</feature>
<feature type="chain" id="PRO_0000090499" description="Photosystem II D2 protein">
    <location>
        <begin position="2"/>
        <end position="352"/>
    </location>
</feature>
<feature type="transmembrane region" description="Helical" evidence="2">
    <location>
        <begin position="40"/>
        <end position="60"/>
    </location>
</feature>
<feature type="transmembrane region" description="Helical" evidence="2">
    <location>
        <begin position="124"/>
        <end position="140"/>
    </location>
</feature>
<feature type="transmembrane region" description="Helical" evidence="2">
    <location>
        <begin position="152"/>
        <end position="165"/>
    </location>
</feature>
<feature type="transmembrane region" description="Helical" evidence="2">
    <location>
        <begin position="207"/>
        <end position="227"/>
    </location>
</feature>
<feature type="transmembrane region" description="Helical" evidence="2">
    <location>
        <begin position="278"/>
        <end position="294"/>
    </location>
</feature>
<feature type="binding site" description="axial binding residue" evidence="2">
    <location>
        <position position="117"/>
    </location>
    <ligand>
        <name>chlorophyll a</name>
        <dbReference type="ChEBI" id="CHEBI:58416"/>
        <label>ChlzD2</label>
    </ligand>
    <ligandPart>
        <name>Mg</name>
        <dbReference type="ChEBI" id="CHEBI:25107"/>
    </ligandPart>
</feature>
<feature type="binding site" evidence="2">
    <location>
        <position position="129"/>
    </location>
    <ligand>
        <name>pheophytin a</name>
        <dbReference type="ChEBI" id="CHEBI:136840"/>
        <label>D2</label>
    </ligand>
</feature>
<feature type="binding site" evidence="2">
    <location>
        <position position="142"/>
    </location>
    <ligand>
        <name>pheophytin a</name>
        <dbReference type="ChEBI" id="CHEBI:136840"/>
        <label>D2</label>
    </ligand>
</feature>
<feature type="binding site" description="axial binding residue" evidence="2">
    <location>
        <position position="197"/>
    </location>
    <ligand>
        <name>chlorophyll a</name>
        <dbReference type="ChEBI" id="CHEBI:58416"/>
        <label>PD2</label>
    </ligand>
    <ligandPart>
        <name>Mg</name>
        <dbReference type="ChEBI" id="CHEBI:25107"/>
    </ligandPart>
</feature>
<feature type="binding site" evidence="2">
    <location>
        <position position="214"/>
    </location>
    <ligand>
        <name>a plastoquinone</name>
        <dbReference type="ChEBI" id="CHEBI:17757"/>
        <label>Q(A)</label>
    </ligand>
</feature>
<feature type="binding site" evidence="2">
    <location>
        <position position="214"/>
    </location>
    <ligand>
        <name>Fe cation</name>
        <dbReference type="ChEBI" id="CHEBI:24875"/>
        <note>ligand shared with heterodimeric partner</note>
    </ligand>
</feature>
<feature type="binding site" evidence="2">
    <location>
        <position position="261"/>
    </location>
    <ligand>
        <name>a plastoquinone</name>
        <dbReference type="ChEBI" id="CHEBI:17757"/>
        <label>Q(A)</label>
    </ligand>
</feature>
<feature type="binding site" evidence="2">
    <location>
        <position position="268"/>
    </location>
    <ligand>
        <name>Fe cation</name>
        <dbReference type="ChEBI" id="CHEBI:24875"/>
        <note>ligand shared with heterodimeric partner</note>
    </ligand>
</feature>
<feature type="modified residue" description="N-acetylthreonine" evidence="1">
    <location>
        <position position="2"/>
    </location>
</feature>
<feature type="modified residue" description="Phosphothreonine" evidence="1">
    <location>
        <position position="2"/>
    </location>
</feature>
<sequence length="352" mass="39429">MTIAIGKTQEKRGLFDVVDDWLRRDRFVFVGWSGLLLFPTAYLALGGWFTGTTFVTSWYTHGLATSYLEGCNFLTAAVSTPANSMGHSLLFLWGPEAQGDFTRWCQLGGLWTFVALHGSFALIGFMLRQFEIARSVKIRPYNAIAFSAPISVFVSVFLIYPLGQSGWFFAPSFGVAAIFRFILFFQGFHNWTLNPFHMMGVAGVLGAALLCAIHGATVENTLFEDGDGANTFRAFNPTQAEETYSMVTANRFWSQIFGVAFSNKRWLHFFMLFVPVTGLWMSAIGVVGLALNLRAYDFVSQEIRAAEDPEFETFYTKNILLNEGIRAWMAAQDQPHEKLVFPEEVLPRGNAL</sequence>
<keyword id="KW-0007">Acetylation</keyword>
<keyword id="KW-0148">Chlorophyll</keyword>
<keyword id="KW-0150">Chloroplast</keyword>
<keyword id="KW-0157">Chromophore</keyword>
<keyword id="KW-0249">Electron transport</keyword>
<keyword id="KW-0408">Iron</keyword>
<keyword id="KW-0460">Magnesium</keyword>
<keyword id="KW-0472">Membrane</keyword>
<keyword id="KW-0479">Metal-binding</keyword>
<keyword id="KW-0560">Oxidoreductase</keyword>
<keyword id="KW-0597">Phosphoprotein</keyword>
<keyword id="KW-0602">Photosynthesis</keyword>
<keyword id="KW-0604">Photosystem II</keyword>
<keyword id="KW-0934">Plastid</keyword>
<keyword id="KW-0793">Thylakoid</keyword>
<keyword id="KW-0812">Transmembrane</keyword>
<keyword id="KW-1133">Transmembrane helix</keyword>
<keyword id="KW-0813">Transport</keyword>
<dbReference type="EC" id="1.10.3.9" evidence="2"/>
<dbReference type="EMBL" id="AB001684">
    <property type="protein sequence ID" value="BAA57876.1"/>
    <property type="molecule type" value="Genomic_DNA"/>
</dbReference>
<dbReference type="PIR" id="T07229">
    <property type="entry name" value="T07229"/>
</dbReference>
<dbReference type="RefSeq" id="NP_045801.1">
    <property type="nucleotide sequence ID" value="NC_001865.1"/>
</dbReference>
<dbReference type="SMR" id="P56319"/>
<dbReference type="GeneID" id="809106"/>
<dbReference type="OrthoDB" id="34776at2759"/>
<dbReference type="GO" id="GO:0009535">
    <property type="term" value="C:chloroplast thylakoid membrane"/>
    <property type="evidence" value="ECO:0007669"/>
    <property type="project" value="UniProtKB-SubCell"/>
</dbReference>
<dbReference type="GO" id="GO:0009523">
    <property type="term" value="C:photosystem II"/>
    <property type="evidence" value="ECO:0007669"/>
    <property type="project" value="UniProtKB-KW"/>
</dbReference>
<dbReference type="GO" id="GO:0016168">
    <property type="term" value="F:chlorophyll binding"/>
    <property type="evidence" value="ECO:0007669"/>
    <property type="project" value="UniProtKB-UniRule"/>
</dbReference>
<dbReference type="GO" id="GO:0045156">
    <property type="term" value="F:electron transporter, transferring electrons within the cyclic electron transport pathway of photosynthesis activity"/>
    <property type="evidence" value="ECO:0007669"/>
    <property type="project" value="InterPro"/>
</dbReference>
<dbReference type="GO" id="GO:0005506">
    <property type="term" value="F:iron ion binding"/>
    <property type="evidence" value="ECO:0007669"/>
    <property type="project" value="UniProtKB-UniRule"/>
</dbReference>
<dbReference type="GO" id="GO:0010242">
    <property type="term" value="F:oxygen evolving activity"/>
    <property type="evidence" value="ECO:0007669"/>
    <property type="project" value="UniProtKB-EC"/>
</dbReference>
<dbReference type="GO" id="GO:0009772">
    <property type="term" value="P:photosynthetic electron transport in photosystem II"/>
    <property type="evidence" value="ECO:0007669"/>
    <property type="project" value="InterPro"/>
</dbReference>
<dbReference type="CDD" id="cd09288">
    <property type="entry name" value="Photosystem-II_D2"/>
    <property type="match status" value="1"/>
</dbReference>
<dbReference type="FunFam" id="1.20.85.10:FF:000001">
    <property type="entry name" value="photosystem II D2 protein-like"/>
    <property type="match status" value="1"/>
</dbReference>
<dbReference type="Gene3D" id="1.20.85.10">
    <property type="entry name" value="Photosystem II protein D1-like"/>
    <property type="match status" value="1"/>
</dbReference>
<dbReference type="HAMAP" id="MF_01383">
    <property type="entry name" value="PSII_PsbD_D2"/>
    <property type="match status" value="1"/>
</dbReference>
<dbReference type="InterPro" id="IPR055266">
    <property type="entry name" value="D1/D2"/>
</dbReference>
<dbReference type="InterPro" id="IPR036854">
    <property type="entry name" value="Photo_II_D1/D2_sf"/>
</dbReference>
<dbReference type="InterPro" id="IPR000484">
    <property type="entry name" value="Photo_RC_L/M"/>
</dbReference>
<dbReference type="InterPro" id="IPR055265">
    <property type="entry name" value="Photo_RC_L/M_CS"/>
</dbReference>
<dbReference type="InterPro" id="IPR005868">
    <property type="entry name" value="PSII_PsbD/D2"/>
</dbReference>
<dbReference type="NCBIfam" id="TIGR01152">
    <property type="entry name" value="psbD"/>
    <property type="match status" value="1"/>
</dbReference>
<dbReference type="PANTHER" id="PTHR33149:SF12">
    <property type="entry name" value="PHOTOSYSTEM II D2 PROTEIN"/>
    <property type="match status" value="1"/>
</dbReference>
<dbReference type="PANTHER" id="PTHR33149">
    <property type="entry name" value="PHOTOSYSTEM II PROTEIN D1"/>
    <property type="match status" value="1"/>
</dbReference>
<dbReference type="Pfam" id="PF00124">
    <property type="entry name" value="Photo_RC"/>
    <property type="match status" value="1"/>
</dbReference>
<dbReference type="PRINTS" id="PR00256">
    <property type="entry name" value="REACTNCENTRE"/>
</dbReference>
<dbReference type="SUPFAM" id="SSF81483">
    <property type="entry name" value="Bacterial photosystem II reaction centre, L and M subunits"/>
    <property type="match status" value="1"/>
</dbReference>
<dbReference type="PROSITE" id="PS00244">
    <property type="entry name" value="REACTION_CENTER"/>
    <property type="match status" value="1"/>
</dbReference>
<gene>
    <name evidence="2" type="primary">psbD</name>
</gene>
<organism>
    <name type="scientific">Chlorella vulgaris</name>
    <name type="common">Green alga</name>
    <dbReference type="NCBI Taxonomy" id="3077"/>
    <lineage>
        <taxon>Eukaryota</taxon>
        <taxon>Viridiplantae</taxon>
        <taxon>Chlorophyta</taxon>
        <taxon>core chlorophytes</taxon>
        <taxon>Trebouxiophyceae</taxon>
        <taxon>Chlorellales</taxon>
        <taxon>Chlorellaceae</taxon>
        <taxon>Chlorella clade</taxon>
        <taxon>Chlorella</taxon>
    </lineage>
</organism>
<accession>P56319</accession>
<reference key="1">
    <citation type="journal article" date="1997" name="Proc. Natl. Acad. Sci. U.S.A.">
        <title>Complete nucleotide sequence of the chloroplast genome from the green alga Chlorella vulgaris: the existence of genes possibly involved in chloroplast division.</title>
        <authorList>
            <person name="Wakasugi T."/>
            <person name="Nagai T."/>
            <person name="Kapoor M."/>
            <person name="Sugita M."/>
            <person name="Ito M."/>
            <person name="Ito S."/>
            <person name="Tsudzuki J."/>
            <person name="Nakashima K."/>
            <person name="Tsudzuki T."/>
            <person name="Suzuki Y."/>
            <person name="Hamada A."/>
            <person name="Ohta T."/>
            <person name="Inamura A."/>
            <person name="Yoshinaga K."/>
            <person name="Sugiura M."/>
        </authorList>
    </citation>
    <scope>NUCLEOTIDE SEQUENCE [LARGE SCALE GENOMIC DNA]</scope>
    <source>
        <strain>IAM C-27 / Tamiya</strain>
    </source>
</reference>
<comment type="function">
    <text evidence="2">Photosystem II (PSII) is a light-driven water:plastoquinone oxidoreductase that uses light energy to abstract electrons from H(2)O, generating O(2) and a proton gradient subsequently used for ATP formation. It consists of a core antenna complex that captures photons, and an electron transfer chain that converts photonic excitation into a charge separation. The D1/D2 (PsbA/PsbD) reaction center heterodimer binds P680, the primary electron donor of PSII as well as several subsequent electron acceptors. D2 is needed for assembly of a stable PSII complex.</text>
</comment>
<comment type="catalytic activity">
    <reaction evidence="2">
        <text>2 a plastoquinone + 4 hnu + 2 H2O = 2 a plastoquinol + O2</text>
        <dbReference type="Rhea" id="RHEA:36359"/>
        <dbReference type="Rhea" id="RHEA-COMP:9561"/>
        <dbReference type="Rhea" id="RHEA-COMP:9562"/>
        <dbReference type="ChEBI" id="CHEBI:15377"/>
        <dbReference type="ChEBI" id="CHEBI:15379"/>
        <dbReference type="ChEBI" id="CHEBI:17757"/>
        <dbReference type="ChEBI" id="CHEBI:30212"/>
        <dbReference type="ChEBI" id="CHEBI:62192"/>
        <dbReference type="EC" id="1.10.3.9"/>
    </reaction>
</comment>
<comment type="cofactor">
    <text evidence="2">The D1/D2 heterodimer binds P680, chlorophylls that are the primary electron donor of PSII, and subsequent electron acceptors. It shares a non-heme iron and each subunit binds pheophytin, quinone, additional chlorophylls, carotenoids and lipids. There is also a Cl(-1) ion associated with D1 and D2, which is required for oxygen evolution. The PSII complex binds additional chlorophylls, carotenoids and specific lipids.</text>
</comment>
<comment type="subunit">
    <text evidence="2">PSII is composed of 1 copy each of membrane proteins PsbA, PsbB, PsbC, PsbD, PsbE, PsbF, PsbH, PsbI, PsbJ, PsbK, PsbL, PsbM, PsbT, PsbX, PsbY, PsbZ, Psb30/Ycf12, at least 3 peripheral proteins of the oxygen-evolving complex and a large number of cofactors. It forms dimeric complexes.</text>
</comment>
<comment type="subcellular location">
    <subcellularLocation>
        <location evidence="2">Plastid</location>
        <location evidence="2">Chloroplast thylakoid membrane</location>
        <topology evidence="2">Multi-pass membrane protein</topology>
    </subcellularLocation>
</comment>
<comment type="miscellaneous">
    <text evidence="2">2 of the reaction center chlorophylls (ChlD1 and ChlD2) are entirely coordinated by water.</text>
</comment>
<comment type="similarity">
    <text evidence="2">Belongs to the reaction center PufL/M/PsbA/D family.</text>
</comment>
<evidence type="ECO:0000250" key="1">
    <source>
        <dbReference type="UniProtKB" id="P56761"/>
    </source>
</evidence>
<evidence type="ECO:0000255" key="2">
    <source>
        <dbReference type="HAMAP-Rule" id="MF_01383"/>
    </source>
</evidence>
<name>PSBD_CHLVU</name>